<protein>
    <recommendedName>
        <fullName evidence="1">Arginine--tRNA ligase</fullName>
        <ecNumber evidence="1">6.1.1.19</ecNumber>
    </recommendedName>
    <alternativeName>
        <fullName evidence="1">Arginyl-tRNA synthetase</fullName>
        <shortName evidence="1">ArgRS</shortName>
    </alternativeName>
</protein>
<comment type="catalytic activity">
    <reaction evidence="1">
        <text>tRNA(Arg) + L-arginine + ATP = L-arginyl-tRNA(Arg) + AMP + diphosphate</text>
        <dbReference type="Rhea" id="RHEA:20301"/>
        <dbReference type="Rhea" id="RHEA-COMP:9658"/>
        <dbReference type="Rhea" id="RHEA-COMP:9673"/>
        <dbReference type="ChEBI" id="CHEBI:30616"/>
        <dbReference type="ChEBI" id="CHEBI:32682"/>
        <dbReference type="ChEBI" id="CHEBI:33019"/>
        <dbReference type="ChEBI" id="CHEBI:78442"/>
        <dbReference type="ChEBI" id="CHEBI:78513"/>
        <dbReference type="ChEBI" id="CHEBI:456215"/>
        <dbReference type="EC" id="6.1.1.19"/>
    </reaction>
</comment>
<comment type="subunit">
    <text evidence="1">Monomer.</text>
</comment>
<comment type="subcellular location">
    <subcellularLocation>
        <location evidence="1">Cytoplasm</location>
    </subcellularLocation>
</comment>
<comment type="similarity">
    <text evidence="1">Belongs to the class-I aminoacyl-tRNA synthetase family.</text>
</comment>
<reference key="1">
    <citation type="submission" date="2008-05" db="EMBL/GenBank/DDBJ databases">
        <title>Genome sequence of Helicobacter pylori from the remote Amazon: traces of Asian ancestry of the first Americans.</title>
        <authorList>
            <person name="Kersulyte D."/>
            <person name="Kalia A."/>
            <person name="Gilman R.H."/>
            <person name="Berg D.E."/>
        </authorList>
    </citation>
    <scope>NUCLEOTIDE SEQUENCE [LARGE SCALE GENOMIC DNA]</scope>
    <source>
        <strain>Shi470</strain>
    </source>
</reference>
<keyword id="KW-0030">Aminoacyl-tRNA synthetase</keyword>
<keyword id="KW-0067">ATP-binding</keyword>
<keyword id="KW-0963">Cytoplasm</keyword>
<keyword id="KW-0436">Ligase</keyword>
<keyword id="KW-0547">Nucleotide-binding</keyword>
<keyword id="KW-0648">Protein biosynthesis</keyword>
<sequence length="541" mass="62212">MHTLIKGVLEEILEEEVIIEYPKDREHGHYATPIAFNLAKVFKKSPLVIAEELALKISTHEKTQGLFDSVVACKGYINFTLSLDFLERFTQKALELKEKFGSQPKSERSQKIFLEFVSANPTGPLHIGHARGAVFGDSLAKIARFLGHEVLCEYYVNDMGSQIRLLGLSVWLAYREHVLKESVTYPEVFYKGEYIIEIAKKANNDLEPSLFKENEETIIEVLSGYAKDLMLLEIKDNLDALGIHFDSYASEREVFKHKDAVFERLEKANALYEKDSKIWLKSSLYQDESDRVLIKEDKSYTYLAGDIVYHDEKFKQNYTKYINIWGADHHGYIARVKASLEFLGYDSNKLEVLLAQMVRLLKDNEPYKMSKRAGNFILIKDVIDDVGKDALRFIFLSKRLDTHLEFDVNTLKKQDSSNPIYYIHYANSRIHTMLEKSPFSKEEVLQTPLTDLNAEEKYLLFSALSLPKIIESSFEEYGLQKMCEYAKTLASEFHRFYNAGKILDTPKAKELLKICLMVSLSLSNAFKLLGIEIKTKISAKD</sequence>
<feature type="chain" id="PRO_1000095371" description="Arginine--tRNA ligase">
    <location>
        <begin position="1"/>
        <end position="541"/>
    </location>
</feature>
<feature type="short sequence motif" description="'HIGH' region">
    <location>
        <begin position="119"/>
        <end position="129"/>
    </location>
</feature>
<name>SYR_HELPS</name>
<evidence type="ECO:0000255" key="1">
    <source>
        <dbReference type="HAMAP-Rule" id="MF_00123"/>
    </source>
</evidence>
<proteinExistence type="inferred from homology"/>
<dbReference type="EC" id="6.1.1.19" evidence="1"/>
<dbReference type="EMBL" id="CP001072">
    <property type="protein sequence ID" value="ACD47780.1"/>
    <property type="molecule type" value="Genomic_DNA"/>
</dbReference>
<dbReference type="RefSeq" id="WP_000557181.1">
    <property type="nucleotide sequence ID" value="NC_010698.2"/>
</dbReference>
<dbReference type="SMR" id="B2USE8"/>
<dbReference type="KEGG" id="hps:HPSH_01650"/>
<dbReference type="HOGENOM" id="CLU_006406_0_1_7"/>
<dbReference type="GO" id="GO:0005737">
    <property type="term" value="C:cytoplasm"/>
    <property type="evidence" value="ECO:0007669"/>
    <property type="project" value="UniProtKB-SubCell"/>
</dbReference>
<dbReference type="GO" id="GO:0004814">
    <property type="term" value="F:arginine-tRNA ligase activity"/>
    <property type="evidence" value="ECO:0007669"/>
    <property type="project" value="UniProtKB-UniRule"/>
</dbReference>
<dbReference type="GO" id="GO:0005524">
    <property type="term" value="F:ATP binding"/>
    <property type="evidence" value="ECO:0007669"/>
    <property type="project" value="UniProtKB-UniRule"/>
</dbReference>
<dbReference type="GO" id="GO:0006420">
    <property type="term" value="P:arginyl-tRNA aminoacylation"/>
    <property type="evidence" value="ECO:0007669"/>
    <property type="project" value="UniProtKB-UniRule"/>
</dbReference>
<dbReference type="CDD" id="cd00671">
    <property type="entry name" value="ArgRS_core"/>
    <property type="match status" value="1"/>
</dbReference>
<dbReference type="FunFam" id="3.30.1360.70:FF:000008">
    <property type="entry name" value="Arginine--tRNA ligase"/>
    <property type="match status" value="1"/>
</dbReference>
<dbReference type="FunFam" id="3.40.50.620:FF:000062">
    <property type="entry name" value="Arginine--tRNA ligase"/>
    <property type="match status" value="1"/>
</dbReference>
<dbReference type="Gene3D" id="3.30.1360.70">
    <property type="entry name" value="Arginyl tRNA synthetase N-terminal domain"/>
    <property type="match status" value="1"/>
</dbReference>
<dbReference type="Gene3D" id="3.40.50.620">
    <property type="entry name" value="HUPs"/>
    <property type="match status" value="1"/>
</dbReference>
<dbReference type="Gene3D" id="1.10.730.10">
    <property type="entry name" value="Isoleucyl-tRNA Synthetase, Domain 1"/>
    <property type="match status" value="1"/>
</dbReference>
<dbReference type="HAMAP" id="MF_00123">
    <property type="entry name" value="Arg_tRNA_synth"/>
    <property type="match status" value="1"/>
</dbReference>
<dbReference type="InterPro" id="IPR001412">
    <property type="entry name" value="aa-tRNA-synth_I_CS"/>
</dbReference>
<dbReference type="InterPro" id="IPR001278">
    <property type="entry name" value="Arg-tRNA-ligase"/>
</dbReference>
<dbReference type="InterPro" id="IPR005148">
    <property type="entry name" value="Arg-tRNA-synth_N"/>
</dbReference>
<dbReference type="InterPro" id="IPR036695">
    <property type="entry name" value="Arg-tRNA-synth_N_sf"/>
</dbReference>
<dbReference type="InterPro" id="IPR035684">
    <property type="entry name" value="ArgRS_core"/>
</dbReference>
<dbReference type="InterPro" id="IPR008909">
    <property type="entry name" value="DALR_anticod-bd"/>
</dbReference>
<dbReference type="InterPro" id="IPR014729">
    <property type="entry name" value="Rossmann-like_a/b/a_fold"/>
</dbReference>
<dbReference type="InterPro" id="IPR009080">
    <property type="entry name" value="tRNAsynth_Ia_anticodon-bd"/>
</dbReference>
<dbReference type="NCBIfam" id="TIGR00456">
    <property type="entry name" value="argS"/>
    <property type="match status" value="1"/>
</dbReference>
<dbReference type="PANTHER" id="PTHR11956:SF5">
    <property type="entry name" value="ARGININE--TRNA LIGASE, CYTOPLASMIC"/>
    <property type="match status" value="1"/>
</dbReference>
<dbReference type="PANTHER" id="PTHR11956">
    <property type="entry name" value="ARGINYL-TRNA SYNTHETASE"/>
    <property type="match status" value="1"/>
</dbReference>
<dbReference type="Pfam" id="PF03485">
    <property type="entry name" value="Arg_tRNA_synt_N"/>
    <property type="match status" value="1"/>
</dbReference>
<dbReference type="Pfam" id="PF05746">
    <property type="entry name" value="DALR_1"/>
    <property type="match status" value="1"/>
</dbReference>
<dbReference type="Pfam" id="PF00750">
    <property type="entry name" value="tRNA-synt_1d"/>
    <property type="match status" value="1"/>
</dbReference>
<dbReference type="PRINTS" id="PR01038">
    <property type="entry name" value="TRNASYNTHARG"/>
</dbReference>
<dbReference type="SMART" id="SM01016">
    <property type="entry name" value="Arg_tRNA_synt_N"/>
    <property type="match status" value="1"/>
</dbReference>
<dbReference type="SMART" id="SM00836">
    <property type="entry name" value="DALR_1"/>
    <property type="match status" value="1"/>
</dbReference>
<dbReference type="SUPFAM" id="SSF47323">
    <property type="entry name" value="Anticodon-binding domain of a subclass of class I aminoacyl-tRNA synthetases"/>
    <property type="match status" value="1"/>
</dbReference>
<dbReference type="SUPFAM" id="SSF55190">
    <property type="entry name" value="Arginyl-tRNA synthetase (ArgRS), N-terminal 'additional' domain"/>
    <property type="match status" value="1"/>
</dbReference>
<dbReference type="SUPFAM" id="SSF52374">
    <property type="entry name" value="Nucleotidylyl transferase"/>
    <property type="match status" value="1"/>
</dbReference>
<dbReference type="PROSITE" id="PS00178">
    <property type="entry name" value="AA_TRNA_LIGASE_I"/>
    <property type="match status" value="1"/>
</dbReference>
<organism>
    <name type="scientific">Helicobacter pylori (strain Shi470)</name>
    <dbReference type="NCBI Taxonomy" id="512562"/>
    <lineage>
        <taxon>Bacteria</taxon>
        <taxon>Pseudomonadati</taxon>
        <taxon>Campylobacterota</taxon>
        <taxon>Epsilonproteobacteria</taxon>
        <taxon>Campylobacterales</taxon>
        <taxon>Helicobacteraceae</taxon>
        <taxon>Helicobacter</taxon>
    </lineage>
</organism>
<accession>B2USE8</accession>
<gene>
    <name evidence="1" type="primary">argS</name>
    <name type="ordered locus">HPSH_01650</name>
</gene>